<sequence length="515" mass="53481">MTTEPGYLSPSVAVATSMPKRGVGAAVLIVPVVSTGEEDRPGAVVASAEPFLRADTVAEIEAGLRALDATGASDQVHRLAVPSLPVGSVLTVGLGKPRREWPADTIRCAAGVAARALNSSEAVITTLAELPGDGICSATVEGLILGSYRFSAFRSDKTAPKDAGLRKITVLCCAKDAKKRALHGAAVATAVATARDLVNTPPSHLFPAEFAKRAKTLSESVGLDVEVIDEKALKKAGYGGVIGVGQGSSRPPRLVRLIHRGSRLAKNPQKAKKVALVGKGITFDTGGISIKPAASMHHMTSDMGGAAAVIATVTLAARLRLPIDVIATVPMAENMPSATAQRPGDVLTQYGGTTVEVLNTDAEGRLILADAIVRACEDKPDYLIETSTLTGAQTVALGTRIPGVMGSDEFRDRVAAISQRVGENGWPMPLPDDLKDDLKSTVADLANVSGQRFAGMLVAGVFLREFVAESVDWAHIDVAGPAYNTGSAWGYTPKGATGVPTRTMFAVLEDIAKNG</sequence>
<organism>
    <name type="scientific">Mycobacterium tuberculosis (strain ATCC 25177 / H37Ra)</name>
    <dbReference type="NCBI Taxonomy" id="419947"/>
    <lineage>
        <taxon>Bacteria</taxon>
        <taxon>Bacillati</taxon>
        <taxon>Actinomycetota</taxon>
        <taxon>Actinomycetes</taxon>
        <taxon>Mycobacteriales</taxon>
        <taxon>Mycobacteriaceae</taxon>
        <taxon>Mycobacterium</taxon>
        <taxon>Mycobacterium tuberculosis complex</taxon>
    </lineage>
</organism>
<name>AMPA_MYCTA</name>
<evidence type="ECO:0000255" key="1">
    <source>
        <dbReference type="HAMAP-Rule" id="MF_00181"/>
    </source>
</evidence>
<accession>A5U4P1</accession>
<comment type="function">
    <text evidence="1">Presumably involved in the processing and regular turnover of intracellular proteins. Catalyzes the removal of unsubstituted N-terminal amino acids from various peptides.</text>
</comment>
<comment type="catalytic activity">
    <reaction evidence="1">
        <text>Release of an N-terminal amino acid, Xaa-|-Yaa-, in which Xaa is preferably Leu, but may be other amino acids including Pro although not Arg or Lys, and Yaa may be Pro. Amino acid amides and methyl esters are also readily hydrolyzed, but rates on arylamides are exceedingly low.</text>
        <dbReference type="EC" id="3.4.11.1"/>
    </reaction>
</comment>
<comment type="catalytic activity">
    <reaction evidence="1">
        <text>Release of an N-terminal amino acid, preferentially leucine, but not glutamic or aspartic acids.</text>
        <dbReference type="EC" id="3.4.11.10"/>
    </reaction>
</comment>
<comment type="cofactor">
    <cofactor evidence="1">
        <name>Mn(2+)</name>
        <dbReference type="ChEBI" id="CHEBI:29035"/>
    </cofactor>
    <text evidence="1">Binds 2 manganese ions per subunit.</text>
</comment>
<comment type="subcellular location">
    <subcellularLocation>
        <location evidence="1">Cytoplasm</location>
    </subcellularLocation>
</comment>
<comment type="similarity">
    <text evidence="1">Belongs to the peptidase M17 family.</text>
</comment>
<proteinExistence type="inferred from homology"/>
<gene>
    <name evidence="1" type="primary">pepA</name>
    <name type="ordered locus">MRA_2229</name>
</gene>
<feature type="chain" id="PRO_1000019940" description="Probable cytosol aminopeptidase">
    <location>
        <begin position="1"/>
        <end position="515"/>
    </location>
</feature>
<feature type="active site" evidence="1">
    <location>
        <position position="291"/>
    </location>
</feature>
<feature type="active site" evidence="1">
    <location>
        <position position="365"/>
    </location>
</feature>
<feature type="binding site" evidence="1">
    <location>
        <position position="279"/>
    </location>
    <ligand>
        <name>Mn(2+)</name>
        <dbReference type="ChEBI" id="CHEBI:29035"/>
        <label>2</label>
    </ligand>
</feature>
<feature type="binding site" evidence="1">
    <location>
        <position position="284"/>
    </location>
    <ligand>
        <name>Mn(2+)</name>
        <dbReference type="ChEBI" id="CHEBI:29035"/>
        <label>1</label>
    </ligand>
</feature>
<feature type="binding site" evidence="1">
    <location>
        <position position="284"/>
    </location>
    <ligand>
        <name>Mn(2+)</name>
        <dbReference type="ChEBI" id="CHEBI:29035"/>
        <label>2</label>
    </ligand>
</feature>
<feature type="binding site" evidence="1">
    <location>
        <position position="302"/>
    </location>
    <ligand>
        <name>Mn(2+)</name>
        <dbReference type="ChEBI" id="CHEBI:29035"/>
        <label>2</label>
    </ligand>
</feature>
<feature type="binding site" evidence="1">
    <location>
        <position position="361"/>
    </location>
    <ligand>
        <name>Mn(2+)</name>
        <dbReference type="ChEBI" id="CHEBI:29035"/>
        <label>1</label>
    </ligand>
</feature>
<feature type="binding site" evidence="1">
    <location>
        <position position="363"/>
    </location>
    <ligand>
        <name>Mn(2+)</name>
        <dbReference type="ChEBI" id="CHEBI:29035"/>
        <label>1</label>
    </ligand>
</feature>
<feature type="binding site" evidence="1">
    <location>
        <position position="363"/>
    </location>
    <ligand>
        <name>Mn(2+)</name>
        <dbReference type="ChEBI" id="CHEBI:29035"/>
        <label>2</label>
    </ligand>
</feature>
<reference key="1">
    <citation type="journal article" date="2008" name="PLoS ONE">
        <title>Genetic basis of virulence attenuation revealed by comparative genomic analysis of Mycobacterium tuberculosis strain H37Ra versus H37Rv.</title>
        <authorList>
            <person name="Zheng H."/>
            <person name="Lu L."/>
            <person name="Wang B."/>
            <person name="Pu S."/>
            <person name="Zhang X."/>
            <person name="Zhu G."/>
            <person name="Shi W."/>
            <person name="Zhang L."/>
            <person name="Wang H."/>
            <person name="Wang S."/>
            <person name="Zhao G."/>
            <person name="Zhang Y."/>
        </authorList>
    </citation>
    <scope>NUCLEOTIDE SEQUENCE [LARGE SCALE GENOMIC DNA]</scope>
    <source>
        <strain>ATCC 25177 / H37Ra</strain>
    </source>
</reference>
<dbReference type="EC" id="3.4.11.1" evidence="1"/>
<dbReference type="EC" id="3.4.11.10" evidence="1"/>
<dbReference type="EMBL" id="CP000611">
    <property type="protein sequence ID" value="ABQ73991.1"/>
    <property type="molecule type" value="Genomic_DNA"/>
</dbReference>
<dbReference type="RefSeq" id="WP_003899220.1">
    <property type="nucleotide sequence ID" value="NZ_CP016972.1"/>
</dbReference>
<dbReference type="SMR" id="A5U4P1"/>
<dbReference type="KEGG" id="mra:MRA_2229"/>
<dbReference type="eggNOG" id="COG0260">
    <property type="taxonomic scope" value="Bacteria"/>
</dbReference>
<dbReference type="HOGENOM" id="CLU_013734_2_2_11"/>
<dbReference type="Proteomes" id="UP000001988">
    <property type="component" value="Chromosome"/>
</dbReference>
<dbReference type="GO" id="GO:0005737">
    <property type="term" value="C:cytoplasm"/>
    <property type="evidence" value="ECO:0007669"/>
    <property type="project" value="UniProtKB-SubCell"/>
</dbReference>
<dbReference type="GO" id="GO:0030145">
    <property type="term" value="F:manganese ion binding"/>
    <property type="evidence" value="ECO:0007669"/>
    <property type="project" value="UniProtKB-UniRule"/>
</dbReference>
<dbReference type="GO" id="GO:0070006">
    <property type="term" value="F:metalloaminopeptidase activity"/>
    <property type="evidence" value="ECO:0007669"/>
    <property type="project" value="InterPro"/>
</dbReference>
<dbReference type="GO" id="GO:0006508">
    <property type="term" value="P:proteolysis"/>
    <property type="evidence" value="ECO:0007669"/>
    <property type="project" value="UniProtKB-KW"/>
</dbReference>
<dbReference type="CDD" id="cd00433">
    <property type="entry name" value="Peptidase_M17"/>
    <property type="match status" value="1"/>
</dbReference>
<dbReference type="FunFam" id="3.40.630.10:FF:000087">
    <property type="entry name" value="Probable cytosol aminopeptidase"/>
    <property type="match status" value="1"/>
</dbReference>
<dbReference type="Gene3D" id="3.40.220.10">
    <property type="entry name" value="Leucine Aminopeptidase, subunit E, domain 1"/>
    <property type="match status" value="1"/>
</dbReference>
<dbReference type="Gene3D" id="3.40.630.10">
    <property type="entry name" value="Zn peptidases"/>
    <property type="match status" value="1"/>
</dbReference>
<dbReference type="HAMAP" id="MF_00181">
    <property type="entry name" value="Cytosol_peptidase_M17"/>
    <property type="match status" value="1"/>
</dbReference>
<dbReference type="InterPro" id="IPR011356">
    <property type="entry name" value="Leucine_aapep/pepB"/>
</dbReference>
<dbReference type="InterPro" id="IPR043472">
    <property type="entry name" value="Macro_dom-like"/>
</dbReference>
<dbReference type="InterPro" id="IPR000819">
    <property type="entry name" value="Peptidase_M17_C"/>
</dbReference>
<dbReference type="InterPro" id="IPR023042">
    <property type="entry name" value="Peptidase_M17_leu_NH2_pept"/>
</dbReference>
<dbReference type="InterPro" id="IPR008283">
    <property type="entry name" value="Peptidase_M17_N"/>
</dbReference>
<dbReference type="NCBIfam" id="NF002073">
    <property type="entry name" value="PRK00913.1-2"/>
    <property type="match status" value="1"/>
</dbReference>
<dbReference type="PANTHER" id="PTHR11963:SF23">
    <property type="entry name" value="CYTOSOL AMINOPEPTIDASE"/>
    <property type="match status" value="1"/>
</dbReference>
<dbReference type="PANTHER" id="PTHR11963">
    <property type="entry name" value="LEUCINE AMINOPEPTIDASE-RELATED"/>
    <property type="match status" value="1"/>
</dbReference>
<dbReference type="Pfam" id="PF00883">
    <property type="entry name" value="Peptidase_M17"/>
    <property type="match status" value="1"/>
</dbReference>
<dbReference type="Pfam" id="PF02789">
    <property type="entry name" value="Peptidase_M17_N"/>
    <property type="match status" value="1"/>
</dbReference>
<dbReference type="PRINTS" id="PR00481">
    <property type="entry name" value="LAMNOPPTDASE"/>
</dbReference>
<dbReference type="SUPFAM" id="SSF52949">
    <property type="entry name" value="Macro domain-like"/>
    <property type="match status" value="1"/>
</dbReference>
<dbReference type="SUPFAM" id="SSF53187">
    <property type="entry name" value="Zn-dependent exopeptidases"/>
    <property type="match status" value="1"/>
</dbReference>
<dbReference type="PROSITE" id="PS00631">
    <property type="entry name" value="CYTOSOL_AP"/>
    <property type="match status" value="1"/>
</dbReference>
<keyword id="KW-0031">Aminopeptidase</keyword>
<keyword id="KW-0963">Cytoplasm</keyword>
<keyword id="KW-0378">Hydrolase</keyword>
<keyword id="KW-0464">Manganese</keyword>
<keyword id="KW-0479">Metal-binding</keyword>
<keyword id="KW-0645">Protease</keyword>
<keyword id="KW-1185">Reference proteome</keyword>
<protein>
    <recommendedName>
        <fullName evidence="1">Probable cytosol aminopeptidase</fullName>
        <ecNumber evidence="1">3.4.11.1</ecNumber>
    </recommendedName>
    <alternativeName>
        <fullName evidence="1">Leucine aminopeptidase</fullName>
        <shortName evidence="1">LAP</shortName>
        <ecNumber evidence="1">3.4.11.10</ecNumber>
    </alternativeName>
    <alternativeName>
        <fullName evidence="1">Leucyl aminopeptidase</fullName>
    </alternativeName>
</protein>